<feature type="chain" id="PRO_0000076911" description="Sprouty-related, EVH1 domain-containing protein 2">
    <location>
        <begin position="1"/>
        <end position="410"/>
    </location>
</feature>
<feature type="domain" description="WH1" evidence="2">
    <location>
        <begin position="5"/>
        <end position="122"/>
    </location>
</feature>
<feature type="domain" description="KBD" evidence="4">
    <location>
        <begin position="197"/>
        <end position="252"/>
    </location>
</feature>
<feature type="domain" description="SPR" evidence="3">
    <location>
        <begin position="300"/>
        <end position="408"/>
    </location>
</feature>
<feature type="region of interest" description="Disordered" evidence="5">
    <location>
        <begin position="127"/>
        <end position="171"/>
    </location>
</feature>
<feature type="region of interest" description="Disordered" evidence="5">
    <location>
        <begin position="274"/>
        <end position="294"/>
    </location>
</feature>
<feature type="compositionally biased region" description="Polar residues" evidence="5">
    <location>
        <begin position="146"/>
        <end position="156"/>
    </location>
</feature>
<feature type="modified residue" description="Phosphotyrosine" evidence="1">
    <location>
        <position position="224"/>
    </location>
</feature>
<feature type="modified residue" description="Phosphotyrosine" evidence="1">
    <location>
        <position position="227"/>
    </location>
</feature>
<sequence length="410" mass="46794">MTEETHPDDDSYIVRVKAVVMTRDDSSGGWFPQEGGGISRVGVCKVMHPEGNGRSGFLIHGERQKDKLVVLECYVRKDLVYTKANPTFHHWKVDNRKFGLTFQSPADARAFDRGVRKAIEDLIEGSTTSSSTLHNEAELGDDDVFTTATDSSSNSSQKREPTTRTISSPTSCEHRKIYTLDPYPMDHYHPDQRLPRSYPQVTFPEDDEEIVRINPREKIWMTGYEDYRHAPVRGKYLDTTEDADSYVRFAKGEVPKHEYTYPYVDSSDFGFGEDPKGSVIKTQPPRAKSRRRKENGERSRCVYCRDMFNHEENRRGHCQDAPDAVRTCIRRVSCMWCADSMLYHCMSDPEGDYTDPCSCDTSDEKFCLRWMALIALSFLAPCMCCYLPLRACHRCGVMCRCCGGKHKAAA</sequence>
<keyword id="KW-1003">Cell membrane</keyword>
<keyword id="KW-0963">Cytoplasm</keyword>
<keyword id="KW-0968">Cytoplasmic vesicle</keyword>
<keyword id="KW-0472">Membrane</keyword>
<keyword id="KW-0597">Phosphoprotein</keyword>
<keyword id="KW-1185">Reference proteome</keyword>
<keyword id="KW-0832">Ubl conjugation</keyword>
<gene>
    <name type="primary">Spred2</name>
</gene>
<reference key="1">
    <citation type="journal article" date="2001" name="Nature">
        <title>Spred is a Sprouty-related suppressor of Ras signalling.</title>
        <authorList>
            <person name="Wakioka T."/>
            <person name="Sasaki A."/>
            <person name="Kato R."/>
            <person name="Shouda T."/>
            <person name="Matsumoto A."/>
            <person name="Miyoshi K."/>
            <person name="Tsuneoka M."/>
            <person name="Komiya S."/>
            <person name="Baron R."/>
            <person name="Yoshimura A."/>
        </authorList>
    </citation>
    <scope>NUCLEOTIDE SEQUENCE [MRNA]</scope>
    <scope>SUBCELLULAR LOCATION</scope>
    <scope>INTERACTION WITH RAS</scope>
    <scope>TISSUE SPECIFICITY</scope>
    <scope>FUNCTION</scope>
</reference>
<reference key="2">
    <citation type="journal article" date="2005" name="Science">
        <title>The transcriptional landscape of the mammalian genome.</title>
        <authorList>
            <person name="Carninci P."/>
            <person name="Kasukawa T."/>
            <person name="Katayama S."/>
            <person name="Gough J."/>
            <person name="Frith M.C."/>
            <person name="Maeda N."/>
            <person name="Oyama R."/>
            <person name="Ravasi T."/>
            <person name="Lenhard B."/>
            <person name="Wells C."/>
            <person name="Kodzius R."/>
            <person name="Shimokawa K."/>
            <person name="Bajic V.B."/>
            <person name="Brenner S.E."/>
            <person name="Batalov S."/>
            <person name="Forrest A.R."/>
            <person name="Zavolan M."/>
            <person name="Davis M.J."/>
            <person name="Wilming L.G."/>
            <person name="Aidinis V."/>
            <person name="Allen J.E."/>
            <person name="Ambesi-Impiombato A."/>
            <person name="Apweiler R."/>
            <person name="Aturaliya R.N."/>
            <person name="Bailey T.L."/>
            <person name="Bansal M."/>
            <person name="Baxter L."/>
            <person name="Beisel K.W."/>
            <person name="Bersano T."/>
            <person name="Bono H."/>
            <person name="Chalk A.M."/>
            <person name="Chiu K.P."/>
            <person name="Choudhary V."/>
            <person name="Christoffels A."/>
            <person name="Clutterbuck D.R."/>
            <person name="Crowe M.L."/>
            <person name="Dalla E."/>
            <person name="Dalrymple B.P."/>
            <person name="de Bono B."/>
            <person name="Della Gatta G."/>
            <person name="di Bernardo D."/>
            <person name="Down T."/>
            <person name="Engstrom P."/>
            <person name="Fagiolini M."/>
            <person name="Faulkner G."/>
            <person name="Fletcher C.F."/>
            <person name="Fukushima T."/>
            <person name="Furuno M."/>
            <person name="Futaki S."/>
            <person name="Gariboldi M."/>
            <person name="Georgii-Hemming P."/>
            <person name="Gingeras T.R."/>
            <person name="Gojobori T."/>
            <person name="Green R.E."/>
            <person name="Gustincich S."/>
            <person name="Harbers M."/>
            <person name="Hayashi Y."/>
            <person name="Hensch T.K."/>
            <person name="Hirokawa N."/>
            <person name="Hill D."/>
            <person name="Huminiecki L."/>
            <person name="Iacono M."/>
            <person name="Ikeo K."/>
            <person name="Iwama A."/>
            <person name="Ishikawa T."/>
            <person name="Jakt M."/>
            <person name="Kanapin A."/>
            <person name="Katoh M."/>
            <person name="Kawasawa Y."/>
            <person name="Kelso J."/>
            <person name="Kitamura H."/>
            <person name="Kitano H."/>
            <person name="Kollias G."/>
            <person name="Krishnan S.P."/>
            <person name="Kruger A."/>
            <person name="Kummerfeld S.K."/>
            <person name="Kurochkin I.V."/>
            <person name="Lareau L.F."/>
            <person name="Lazarevic D."/>
            <person name="Lipovich L."/>
            <person name="Liu J."/>
            <person name="Liuni S."/>
            <person name="McWilliam S."/>
            <person name="Madan Babu M."/>
            <person name="Madera M."/>
            <person name="Marchionni L."/>
            <person name="Matsuda H."/>
            <person name="Matsuzawa S."/>
            <person name="Miki H."/>
            <person name="Mignone F."/>
            <person name="Miyake S."/>
            <person name="Morris K."/>
            <person name="Mottagui-Tabar S."/>
            <person name="Mulder N."/>
            <person name="Nakano N."/>
            <person name="Nakauchi H."/>
            <person name="Ng P."/>
            <person name="Nilsson R."/>
            <person name="Nishiguchi S."/>
            <person name="Nishikawa S."/>
            <person name="Nori F."/>
            <person name="Ohara O."/>
            <person name="Okazaki Y."/>
            <person name="Orlando V."/>
            <person name="Pang K.C."/>
            <person name="Pavan W.J."/>
            <person name="Pavesi G."/>
            <person name="Pesole G."/>
            <person name="Petrovsky N."/>
            <person name="Piazza S."/>
            <person name="Reed J."/>
            <person name="Reid J.F."/>
            <person name="Ring B.Z."/>
            <person name="Ringwald M."/>
            <person name="Rost B."/>
            <person name="Ruan Y."/>
            <person name="Salzberg S.L."/>
            <person name="Sandelin A."/>
            <person name="Schneider C."/>
            <person name="Schoenbach C."/>
            <person name="Sekiguchi K."/>
            <person name="Semple C.A."/>
            <person name="Seno S."/>
            <person name="Sessa L."/>
            <person name="Sheng Y."/>
            <person name="Shibata Y."/>
            <person name="Shimada H."/>
            <person name="Shimada K."/>
            <person name="Silva D."/>
            <person name="Sinclair B."/>
            <person name="Sperling S."/>
            <person name="Stupka E."/>
            <person name="Sugiura K."/>
            <person name="Sultana R."/>
            <person name="Takenaka Y."/>
            <person name="Taki K."/>
            <person name="Tammoja K."/>
            <person name="Tan S.L."/>
            <person name="Tang S."/>
            <person name="Taylor M.S."/>
            <person name="Tegner J."/>
            <person name="Teichmann S.A."/>
            <person name="Ueda H.R."/>
            <person name="van Nimwegen E."/>
            <person name="Verardo R."/>
            <person name="Wei C.L."/>
            <person name="Yagi K."/>
            <person name="Yamanishi H."/>
            <person name="Zabarovsky E."/>
            <person name="Zhu S."/>
            <person name="Zimmer A."/>
            <person name="Hide W."/>
            <person name="Bult C."/>
            <person name="Grimmond S.M."/>
            <person name="Teasdale R.D."/>
            <person name="Liu E.T."/>
            <person name="Brusic V."/>
            <person name="Quackenbush J."/>
            <person name="Wahlestedt C."/>
            <person name="Mattick J.S."/>
            <person name="Hume D.A."/>
            <person name="Kai C."/>
            <person name="Sasaki D."/>
            <person name="Tomaru Y."/>
            <person name="Fukuda S."/>
            <person name="Kanamori-Katayama M."/>
            <person name="Suzuki M."/>
            <person name="Aoki J."/>
            <person name="Arakawa T."/>
            <person name="Iida J."/>
            <person name="Imamura K."/>
            <person name="Itoh M."/>
            <person name="Kato T."/>
            <person name="Kawaji H."/>
            <person name="Kawagashira N."/>
            <person name="Kawashima T."/>
            <person name="Kojima M."/>
            <person name="Kondo S."/>
            <person name="Konno H."/>
            <person name="Nakano K."/>
            <person name="Ninomiya N."/>
            <person name="Nishio T."/>
            <person name="Okada M."/>
            <person name="Plessy C."/>
            <person name="Shibata K."/>
            <person name="Shiraki T."/>
            <person name="Suzuki S."/>
            <person name="Tagami M."/>
            <person name="Waki K."/>
            <person name="Watahiki A."/>
            <person name="Okamura-Oho Y."/>
            <person name="Suzuki H."/>
            <person name="Kawai J."/>
            <person name="Hayashizaki Y."/>
        </authorList>
    </citation>
    <scope>NUCLEOTIDE SEQUENCE [LARGE SCALE MRNA]</scope>
    <source>
        <strain>C57BL/6J</strain>
        <tissue>Bone</tissue>
    </source>
</reference>
<reference key="3">
    <citation type="journal article" date="2004" name="Genome Res.">
        <title>The status, quality, and expansion of the NIH full-length cDNA project: the Mammalian Gene Collection (MGC).</title>
        <authorList>
            <consortium name="The MGC Project Team"/>
        </authorList>
    </citation>
    <scope>NUCLEOTIDE SEQUENCE [LARGE SCALE MRNA]</scope>
    <source>
        <strain>C57BL/6J</strain>
        <tissue>Brain</tissue>
    </source>
</reference>
<reference key="4">
    <citation type="journal article" date="2004" name="Histochem. Cell Biol.">
        <title>Expression and subcellular localization of Spred proteins in mouse and human tissues.</title>
        <authorList>
            <person name="Engelhardt C.M."/>
            <person name="Bundschu K."/>
            <person name="Messerschmitt M."/>
            <person name="Renne T."/>
            <person name="Walter U."/>
            <person name="Reinhard M."/>
            <person name="Schuh K."/>
        </authorList>
    </citation>
    <scope>TISSUE SPECIFICITY</scope>
</reference>
<reference key="5">
    <citation type="journal article" date="2005" name="J. Biol. Chem.">
        <title>Gene disruption of Spred-2 causes dwarfism.</title>
        <authorList>
            <person name="Bundschu K."/>
            <person name="Knobeloch K.P."/>
            <person name="Ullrich M."/>
            <person name="Schinke T."/>
            <person name="Amling M."/>
            <person name="Engelhardt C.M."/>
            <person name="Renne T."/>
            <person name="Walter U."/>
            <person name="Schuh K."/>
        </authorList>
    </citation>
    <scope>DISRUPTION PHENOTYPE</scope>
</reference>
<reference key="6">
    <citation type="journal article" date="2008" name="J. Biol. Chem.">
        <title>Tesk1 interacts with Spry2 to abrogate its inhibition of ERK phosphorylation downstream of receptor tyrosine kinase signaling.</title>
        <authorList>
            <person name="Chandramouli S."/>
            <person name="Yu C.Y."/>
            <person name="Yusoff P."/>
            <person name="Lao D.H."/>
            <person name="Leong H.F."/>
            <person name="Mizuno K."/>
            <person name="Guy G.R."/>
        </authorList>
    </citation>
    <scope>INTERACTION WITH TESK1</scope>
</reference>
<reference key="7">
    <citation type="journal article" date="2009" name="Immunity">
        <title>The phagosomal proteome in interferon-gamma-activated macrophages.</title>
        <authorList>
            <person name="Trost M."/>
            <person name="English L."/>
            <person name="Lemieux S."/>
            <person name="Courcelles M."/>
            <person name="Desjardins M."/>
            <person name="Thibault P."/>
        </authorList>
    </citation>
    <scope>IDENTIFICATION BY MASS SPECTROMETRY [LARGE SCALE ANALYSIS]</scope>
</reference>
<reference key="8">
    <citation type="journal article" date="2015" name="Exp. Eye Res.">
        <title>Negative regulation of TGFbeta-induced lens epithelial to mesenchymal transition (EMT) by RTK antagonists.</title>
        <authorList>
            <person name="Zhao G."/>
            <person name="Wojciechowski M.C."/>
            <person name="Jee S."/>
            <person name="Boros J."/>
            <person name="McAvoy J.W."/>
            <person name="Lovicu F.J."/>
        </authorList>
    </citation>
    <scope>FUNCTION</scope>
</reference>
<reference key="9">
    <citation type="journal article" date="2017" name="J. Biol. Chem.">
        <title>Peptide array based screening reveals a large number of proteins interacting with the ankyrin repeat domain of the zDHHC17 S-acyltransferase.</title>
        <authorList>
            <person name="Lemonidis K."/>
            <person name="MacLeod R."/>
            <person name="Baillie G.S."/>
            <person name="Chamberlain L.H."/>
        </authorList>
    </citation>
    <scope>INTERACTION WITH ZDHHC13 AND ZDHHC17</scope>
</reference>
<reference key="10">
    <citation type="journal article" date="2018" name="Exp. Eye Res.">
        <title>Negative regulation of lens fiber cell differentiation by RTK antagonists Spry and Spred.</title>
        <authorList>
            <person name="Zhao G."/>
            <person name="Bailey C.G."/>
            <person name="Feng Y."/>
            <person name="Rasko J."/>
            <person name="Lovicu F.J."/>
        </authorList>
    </citation>
    <scope>FUNCTION</scope>
</reference>
<reference key="11">
    <citation type="journal article" date="2021" name="Am. J. Hum. Genet.">
        <title>SPRED2 loss-of-function causes a recessive Noonan syndrome-like phenotype.</title>
        <authorList>
            <person name="Motta M."/>
            <person name="Fasano G."/>
            <person name="Gredy S."/>
            <person name="Brinkmann J."/>
            <person name="Bonnard A.A."/>
            <person name="Simsek-Kiper P.O."/>
            <person name="Gulec E.Y."/>
            <person name="Essaddam L."/>
            <person name="Utine G.E."/>
            <person name="Guarnetti Prandi I."/>
            <person name="Venditti M."/>
            <person name="Pantaleoni F."/>
            <person name="Radio F.C."/>
            <person name="Ciolfi A."/>
            <person name="Petrini S."/>
            <person name="Consoli F."/>
            <person name="Vignal C."/>
            <person name="Hepbasli D."/>
            <person name="Ullrich M."/>
            <person name="de Boer E."/>
            <person name="Vissers L.E.L.M."/>
            <person name="Gritli S."/>
            <person name="Rossi C."/>
            <person name="De Luca A."/>
            <person name="Ben Becher S."/>
            <person name="Gelb B.D."/>
            <person name="Dallapiccola B."/>
            <person name="Lauri A."/>
            <person name="Chillemi G."/>
            <person name="Schuh K."/>
            <person name="Cave H."/>
            <person name="Zenker M."/>
            <person name="Tartaglia M."/>
        </authorList>
    </citation>
    <scope>DISRUPTION PHENOTYPE</scope>
</reference>
<comment type="function">
    <text evidence="1 6 10 12">Negatively regulates Ras signaling pathways and downstream activation of MAP kinases (PubMed:11493923). Recruits and translocates NF1 to the cell membrane, thereby enabling NF1-dependent hydrolysis of active GTP-bound Ras to inactive GDP-bound Ras (By similarity). Inhibits fibroblast growth factor (FGF)-induced retinal lens fiber differentiation, probably by inhibiting FGF-mediated phosphorylation of ERK1/2 (PubMed:29501879). Inhibits TGFB-induced epithelial-to-mesenchymal transition in lens epithelial cells (PubMed:25576668).</text>
</comment>
<comment type="subunit">
    <text evidence="1 6 9 11">Homodimer and heterodimer (By similarity). Able to interact with SPRED1 to form heterodimers (By similarity). Interacts with RAS (PubMed:11493923). May interact with ZDHHC13 (via ANK repeats) and ZDHHC17 (via ANK repeats) (PubMed:28882895). Interacts with TESK1 (PubMed:17974561). Interacts with NF1 (By similarity).</text>
</comment>
<comment type="subcellular location">
    <subcellularLocation>
        <location evidence="6">Cell membrane</location>
        <topology evidence="6">Peripheral membrane protein</topology>
        <orientation evidence="6">Cytoplasmic side</orientation>
    </subcellularLocation>
    <subcellularLocation>
        <location evidence="1">Cytoplasmic vesicle</location>
        <location evidence="1">Secretory vesicle membrane</location>
        <topology evidence="1">Peripheral membrane protein</topology>
        <orientation evidence="1">Cytoplasmic side</orientation>
    </subcellularLocation>
    <subcellularLocation>
        <location evidence="6">Cytoplasm</location>
    </subcellularLocation>
    <text evidence="1">Detected in the cytoplasm of the stratum spinosum cells, where it is associated with cytoplasmic vesicles that are supposed to be secretory granules.</text>
</comment>
<comment type="tissue specificity">
    <text evidence="6 7">Predominantly expressed in lung, liver and testis. In testis, it is specially found in mature spermatids projecting into the lumen of the seminiferous. Strongly expressed in glandular epithelia. Also expressed in embryonic tissues such as heart, lung, liver and brain.</text>
</comment>
<comment type="PTM">
    <text evidence="1">Phosphorylated on serine and threonine residues. Phosphorylated on tyrosine. Phosphorylation of Tyr-224 and Tyr-227 are required for ubiquitination.</text>
</comment>
<comment type="PTM">
    <text evidence="1">Ubiquitinated; leading to degradation by the proteasome.</text>
</comment>
<comment type="disruption phenotype">
    <text evidence="8 13">SPRED2 knockout results in a dwarf phenotype characterized by reduced growth and body weight, shorter tibia length, and narrower growth plates as compared with wild-type mice. Mutant animals regularly develop kyphosis and scoliosis, and show craniofacial defects, splenomegaly, and cardiac hypertrophy with arrhythmias.</text>
</comment>
<dbReference type="EMBL" id="AB063496">
    <property type="protein sequence ID" value="BAB62849.1"/>
    <property type="molecule type" value="mRNA"/>
</dbReference>
<dbReference type="EMBL" id="AK036430">
    <property type="protein sequence ID" value="BAC29425.1"/>
    <property type="molecule type" value="mRNA"/>
</dbReference>
<dbReference type="EMBL" id="BC066013">
    <property type="protein sequence ID" value="AAH66013.1"/>
    <property type="molecule type" value="mRNA"/>
</dbReference>
<dbReference type="CCDS" id="CCDS24454.1"/>
<dbReference type="RefSeq" id="NP_277058.1">
    <property type="nucleotide sequence ID" value="NM_033523.4"/>
</dbReference>
<dbReference type="BMRB" id="Q924S7"/>
<dbReference type="SMR" id="Q924S7"/>
<dbReference type="BioGRID" id="227830">
    <property type="interactions" value="23"/>
</dbReference>
<dbReference type="FunCoup" id="Q924S7">
    <property type="interactions" value="2015"/>
</dbReference>
<dbReference type="IntAct" id="Q924S7">
    <property type="interactions" value="19"/>
</dbReference>
<dbReference type="STRING" id="10090.ENSMUSP00000090987"/>
<dbReference type="iPTMnet" id="Q924S7"/>
<dbReference type="PhosphoSitePlus" id="Q924S7"/>
<dbReference type="SwissPalm" id="Q924S7"/>
<dbReference type="PaxDb" id="10090-ENSMUSP00000090988"/>
<dbReference type="ProteomicsDB" id="263327"/>
<dbReference type="Antibodypedia" id="30873">
    <property type="antibodies" value="142 antibodies from 29 providers"/>
</dbReference>
<dbReference type="DNASU" id="114716"/>
<dbReference type="Ensembl" id="ENSMUST00000093298.12">
    <property type="protein sequence ID" value="ENSMUSP00000090987.6"/>
    <property type="gene ID" value="ENSMUSG00000045671.19"/>
</dbReference>
<dbReference type="GeneID" id="114716"/>
<dbReference type="KEGG" id="mmu:114716"/>
<dbReference type="UCSC" id="uc007icr.1">
    <property type="organism name" value="mouse"/>
</dbReference>
<dbReference type="AGR" id="MGI:2150019"/>
<dbReference type="CTD" id="200734"/>
<dbReference type="MGI" id="MGI:2150019">
    <property type="gene designation" value="Spred2"/>
</dbReference>
<dbReference type="VEuPathDB" id="HostDB:ENSMUSG00000045671"/>
<dbReference type="eggNOG" id="KOG4590">
    <property type="taxonomic scope" value="Eukaryota"/>
</dbReference>
<dbReference type="GeneTree" id="ENSGT00940000156841"/>
<dbReference type="HOGENOM" id="CLU_038867_1_1_1"/>
<dbReference type="InParanoid" id="Q924S7"/>
<dbReference type="OMA" id="FEHHRIC"/>
<dbReference type="Reactome" id="R-MMU-5658442">
    <property type="pathway name" value="Regulation of RAS by GAPs"/>
</dbReference>
<dbReference type="Reactome" id="R-MMU-5658623">
    <property type="pathway name" value="FGFRL1 modulation of FGFR1 signaling"/>
</dbReference>
<dbReference type="BioGRID-ORCS" id="114716">
    <property type="hits" value="6 hits in 78 CRISPR screens"/>
</dbReference>
<dbReference type="ChiTaRS" id="Spred2">
    <property type="organism name" value="mouse"/>
</dbReference>
<dbReference type="PRO" id="PR:Q924S7"/>
<dbReference type="Proteomes" id="UP000000589">
    <property type="component" value="Chromosome 11"/>
</dbReference>
<dbReference type="RNAct" id="Q924S7">
    <property type="molecule type" value="protein"/>
</dbReference>
<dbReference type="Bgee" id="ENSMUSG00000045671">
    <property type="expression patterns" value="Expressed in embryonic post-anal tail and 259 other cell types or tissues"/>
</dbReference>
<dbReference type="ExpressionAtlas" id="Q924S7">
    <property type="expression patterns" value="baseline and differential"/>
</dbReference>
<dbReference type="GO" id="GO:0031410">
    <property type="term" value="C:cytoplasmic vesicle"/>
    <property type="evidence" value="ECO:0000314"/>
    <property type="project" value="MGI"/>
</dbReference>
<dbReference type="GO" id="GO:0005886">
    <property type="term" value="C:plasma membrane"/>
    <property type="evidence" value="ECO:0000314"/>
    <property type="project" value="MGI"/>
</dbReference>
<dbReference type="GO" id="GO:0030658">
    <property type="term" value="C:transport vesicle membrane"/>
    <property type="evidence" value="ECO:0007669"/>
    <property type="project" value="UniProtKB-SubCell"/>
</dbReference>
<dbReference type="GO" id="GO:0019901">
    <property type="term" value="F:protein kinase binding"/>
    <property type="evidence" value="ECO:0000353"/>
    <property type="project" value="BHF-UCL"/>
</dbReference>
<dbReference type="GO" id="GO:0030291">
    <property type="term" value="F:protein serine/threonine kinase inhibitor activity"/>
    <property type="evidence" value="ECO:0000314"/>
    <property type="project" value="BHF-UCL"/>
</dbReference>
<dbReference type="GO" id="GO:0005173">
    <property type="term" value="F:stem cell factor receptor binding"/>
    <property type="evidence" value="ECO:0000353"/>
    <property type="project" value="MGI"/>
</dbReference>
<dbReference type="GO" id="GO:0010719">
    <property type="term" value="P:negative regulation of epithelial to mesenchymal transition"/>
    <property type="evidence" value="ECO:0000314"/>
    <property type="project" value="UniProtKB"/>
</dbReference>
<dbReference type="GO" id="GO:0070373">
    <property type="term" value="P:negative regulation of ERK1 and ERK2 cascade"/>
    <property type="evidence" value="ECO:0000314"/>
    <property type="project" value="UniProtKB"/>
</dbReference>
<dbReference type="GO" id="GO:1902532">
    <property type="term" value="P:negative regulation of intracellular signal transduction"/>
    <property type="evidence" value="ECO:0000314"/>
    <property type="project" value="BHF-UCL"/>
</dbReference>
<dbReference type="GO" id="GO:1902747">
    <property type="term" value="P:negative regulation of lens fiber cell differentiation"/>
    <property type="evidence" value="ECO:0000314"/>
    <property type="project" value="UniProtKB"/>
</dbReference>
<dbReference type="GO" id="GO:0043409">
    <property type="term" value="P:negative regulation of MAPK cascade"/>
    <property type="evidence" value="ECO:0000315"/>
    <property type="project" value="MGI"/>
</dbReference>
<dbReference type="GO" id="GO:0030512">
    <property type="term" value="P:negative regulation of transforming growth factor beta receptor signaling pathway"/>
    <property type="evidence" value="ECO:0000314"/>
    <property type="project" value="UniProtKB"/>
</dbReference>
<dbReference type="GO" id="GO:0043517">
    <property type="term" value="P:positive regulation of DNA damage response, signal transduction by p53 class mediator"/>
    <property type="evidence" value="ECO:0000314"/>
    <property type="project" value="BHF-UCL"/>
</dbReference>
<dbReference type="CDD" id="cd10574">
    <property type="entry name" value="EVH1_SPRED-like"/>
    <property type="match status" value="1"/>
</dbReference>
<dbReference type="FunFam" id="2.30.29.30:FF:000052">
    <property type="entry name" value="Sprouty-related, EVH1 domain containing 2"/>
    <property type="match status" value="1"/>
</dbReference>
<dbReference type="Gene3D" id="2.30.29.30">
    <property type="entry name" value="Pleckstrin-homology domain (PH domain)/Phosphotyrosine-binding domain (PTB)"/>
    <property type="match status" value="1"/>
</dbReference>
<dbReference type="InterPro" id="IPR023337">
    <property type="entry name" value="KBD"/>
</dbReference>
<dbReference type="InterPro" id="IPR011993">
    <property type="entry name" value="PH-like_dom_sf"/>
</dbReference>
<dbReference type="InterPro" id="IPR041937">
    <property type="entry name" value="SPRE_EVH1"/>
</dbReference>
<dbReference type="InterPro" id="IPR007875">
    <property type="entry name" value="Sprouty"/>
</dbReference>
<dbReference type="InterPro" id="IPR000697">
    <property type="entry name" value="WH1/EVH1_dom"/>
</dbReference>
<dbReference type="PANTHER" id="PTHR11202:SF11">
    <property type="entry name" value="SPROUTY-RELATED, EVH1 DOMAIN-CONTAINING PROTEIN 2"/>
    <property type="match status" value="1"/>
</dbReference>
<dbReference type="PANTHER" id="PTHR11202">
    <property type="entry name" value="SPROUTY-RELATED, EVH1 DOMAIN-CONTAINING PROTEIN FAMILY MEMBER"/>
    <property type="match status" value="1"/>
</dbReference>
<dbReference type="Pfam" id="PF05210">
    <property type="entry name" value="Sprouty"/>
    <property type="match status" value="1"/>
</dbReference>
<dbReference type="Pfam" id="PF00568">
    <property type="entry name" value="WH1"/>
    <property type="match status" value="1"/>
</dbReference>
<dbReference type="SMART" id="SM00461">
    <property type="entry name" value="WH1"/>
    <property type="match status" value="1"/>
</dbReference>
<dbReference type="SUPFAM" id="SSF50729">
    <property type="entry name" value="PH domain-like"/>
    <property type="match status" value="1"/>
</dbReference>
<dbReference type="PROSITE" id="PS51488">
    <property type="entry name" value="KBD"/>
    <property type="match status" value="1"/>
</dbReference>
<dbReference type="PROSITE" id="PS51227">
    <property type="entry name" value="SPR"/>
    <property type="match status" value="1"/>
</dbReference>
<dbReference type="PROSITE" id="PS50229">
    <property type="entry name" value="WH1"/>
    <property type="match status" value="1"/>
</dbReference>
<organism>
    <name type="scientific">Mus musculus</name>
    <name type="common">Mouse</name>
    <dbReference type="NCBI Taxonomy" id="10090"/>
    <lineage>
        <taxon>Eukaryota</taxon>
        <taxon>Metazoa</taxon>
        <taxon>Chordata</taxon>
        <taxon>Craniata</taxon>
        <taxon>Vertebrata</taxon>
        <taxon>Euteleostomi</taxon>
        <taxon>Mammalia</taxon>
        <taxon>Eutheria</taxon>
        <taxon>Euarchontoglires</taxon>
        <taxon>Glires</taxon>
        <taxon>Rodentia</taxon>
        <taxon>Myomorpha</taxon>
        <taxon>Muroidea</taxon>
        <taxon>Muridae</taxon>
        <taxon>Murinae</taxon>
        <taxon>Mus</taxon>
        <taxon>Mus</taxon>
    </lineage>
</organism>
<name>SPRE2_MOUSE</name>
<evidence type="ECO:0000250" key="1">
    <source>
        <dbReference type="UniProtKB" id="Q7Z698"/>
    </source>
</evidence>
<evidence type="ECO:0000255" key="2">
    <source>
        <dbReference type="PROSITE-ProRule" id="PRU00410"/>
    </source>
</evidence>
<evidence type="ECO:0000255" key="3">
    <source>
        <dbReference type="PROSITE-ProRule" id="PRU00572"/>
    </source>
</evidence>
<evidence type="ECO:0000255" key="4">
    <source>
        <dbReference type="PROSITE-ProRule" id="PRU00821"/>
    </source>
</evidence>
<evidence type="ECO:0000256" key="5">
    <source>
        <dbReference type="SAM" id="MobiDB-lite"/>
    </source>
</evidence>
<evidence type="ECO:0000269" key="6">
    <source>
    </source>
</evidence>
<evidence type="ECO:0000269" key="7">
    <source>
    </source>
</evidence>
<evidence type="ECO:0000269" key="8">
    <source>
    </source>
</evidence>
<evidence type="ECO:0000269" key="9">
    <source>
    </source>
</evidence>
<evidence type="ECO:0000269" key="10">
    <source>
    </source>
</evidence>
<evidence type="ECO:0000269" key="11">
    <source>
    </source>
</evidence>
<evidence type="ECO:0000269" key="12">
    <source>
    </source>
</evidence>
<evidence type="ECO:0000269" key="13">
    <source>
    </source>
</evidence>
<protein>
    <recommendedName>
        <fullName>Sprouty-related, EVH1 domain-containing protein 2</fullName>
        <shortName>Spred-2</shortName>
    </recommendedName>
</protein>
<accession>Q924S7</accession>
<proteinExistence type="evidence at protein level"/>